<name>RL15_METSB</name>
<proteinExistence type="inferred from homology"/>
<reference key="1">
    <citation type="journal article" date="2010" name="J. Bacteriol.">
        <title>Complete genome sequence of the aerobic facultative methanotroph Methylocella silvestris BL2.</title>
        <authorList>
            <person name="Chen Y."/>
            <person name="Crombie A."/>
            <person name="Rahman M.T."/>
            <person name="Dedysh S.N."/>
            <person name="Liesack W."/>
            <person name="Stott M.B."/>
            <person name="Alam M."/>
            <person name="Theisen A.R."/>
            <person name="Murrell J.C."/>
            <person name="Dunfield P.F."/>
        </authorList>
    </citation>
    <scope>NUCLEOTIDE SEQUENCE [LARGE SCALE GENOMIC DNA]</scope>
    <source>
        <strain>DSM 15510 / CIP 108128 / LMG 27833 / NCIMB 13906 / BL2</strain>
    </source>
</reference>
<dbReference type="EMBL" id="CP001280">
    <property type="protein sequence ID" value="ACK49533.1"/>
    <property type="molecule type" value="Genomic_DNA"/>
</dbReference>
<dbReference type="RefSeq" id="WP_012589603.1">
    <property type="nucleotide sequence ID" value="NC_011666.1"/>
</dbReference>
<dbReference type="SMR" id="B8ELE4"/>
<dbReference type="STRING" id="395965.Msil_0561"/>
<dbReference type="KEGG" id="msl:Msil_0561"/>
<dbReference type="eggNOG" id="COG0200">
    <property type="taxonomic scope" value="Bacteria"/>
</dbReference>
<dbReference type="HOGENOM" id="CLU_055188_4_0_5"/>
<dbReference type="OrthoDB" id="9810293at2"/>
<dbReference type="Proteomes" id="UP000002257">
    <property type="component" value="Chromosome"/>
</dbReference>
<dbReference type="GO" id="GO:0022625">
    <property type="term" value="C:cytosolic large ribosomal subunit"/>
    <property type="evidence" value="ECO:0007669"/>
    <property type="project" value="TreeGrafter"/>
</dbReference>
<dbReference type="GO" id="GO:0019843">
    <property type="term" value="F:rRNA binding"/>
    <property type="evidence" value="ECO:0007669"/>
    <property type="project" value="UniProtKB-UniRule"/>
</dbReference>
<dbReference type="GO" id="GO:0003735">
    <property type="term" value="F:structural constituent of ribosome"/>
    <property type="evidence" value="ECO:0007669"/>
    <property type="project" value="InterPro"/>
</dbReference>
<dbReference type="GO" id="GO:0006412">
    <property type="term" value="P:translation"/>
    <property type="evidence" value="ECO:0007669"/>
    <property type="project" value="UniProtKB-UniRule"/>
</dbReference>
<dbReference type="Gene3D" id="3.100.10.10">
    <property type="match status" value="1"/>
</dbReference>
<dbReference type="HAMAP" id="MF_01341">
    <property type="entry name" value="Ribosomal_uL15"/>
    <property type="match status" value="1"/>
</dbReference>
<dbReference type="InterPro" id="IPR030878">
    <property type="entry name" value="Ribosomal_uL15"/>
</dbReference>
<dbReference type="InterPro" id="IPR021131">
    <property type="entry name" value="Ribosomal_uL15/eL18"/>
</dbReference>
<dbReference type="InterPro" id="IPR036227">
    <property type="entry name" value="Ribosomal_uL15/eL18_sf"/>
</dbReference>
<dbReference type="InterPro" id="IPR005749">
    <property type="entry name" value="Ribosomal_uL15_bac-type"/>
</dbReference>
<dbReference type="InterPro" id="IPR001196">
    <property type="entry name" value="Ribosomal_uL15_CS"/>
</dbReference>
<dbReference type="NCBIfam" id="TIGR01071">
    <property type="entry name" value="rplO_bact"/>
    <property type="match status" value="1"/>
</dbReference>
<dbReference type="PANTHER" id="PTHR12934">
    <property type="entry name" value="50S RIBOSOMAL PROTEIN L15"/>
    <property type="match status" value="1"/>
</dbReference>
<dbReference type="PANTHER" id="PTHR12934:SF11">
    <property type="entry name" value="LARGE RIBOSOMAL SUBUNIT PROTEIN UL15M"/>
    <property type="match status" value="1"/>
</dbReference>
<dbReference type="Pfam" id="PF00828">
    <property type="entry name" value="Ribosomal_L27A"/>
    <property type="match status" value="1"/>
</dbReference>
<dbReference type="SUPFAM" id="SSF52080">
    <property type="entry name" value="Ribosomal proteins L15p and L18e"/>
    <property type="match status" value="1"/>
</dbReference>
<dbReference type="PROSITE" id="PS00475">
    <property type="entry name" value="RIBOSOMAL_L15"/>
    <property type="match status" value="1"/>
</dbReference>
<keyword id="KW-1185">Reference proteome</keyword>
<keyword id="KW-0687">Ribonucleoprotein</keyword>
<keyword id="KW-0689">Ribosomal protein</keyword>
<keyword id="KW-0694">RNA-binding</keyword>
<keyword id="KW-0699">rRNA-binding</keyword>
<protein>
    <recommendedName>
        <fullName evidence="1">Large ribosomal subunit protein uL15</fullName>
    </recommendedName>
    <alternativeName>
        <fullName evidence="3">50S ribosomal protein L15</fullName>
    </alternativeName>
</protein>
<evidence type="ECO:0000255" key="1">
    <source>
        <dbReference type="HAMAP-Rule" id="MF_01341"/>
    </source>
</evidence>
<evidence type="ECO:0000256" key="2">
    <source>
        <dbReference type="SAM" id="MobiDB-lite"/>
    </source>
</evidence>
<evidence type="ECO:0000305" key="3"/>
<organism>
    <name type="scientific">Methylocella silvestris (strain DSM 15510 / CIP 108128 / LMG 27833 / NCIMB 13906 / BL2)</name>
    <dbReference type="NCBI Taxonomy" id="395965"/>
    <lineage>
        <taxon>Bacteria</taxon>
        <taxon>Pseudomonadati</taxon>
        <taxon>Pseudomonadota</taxon>
        <taxon>Alphaproteobacteria</taxon>
        <taxon>Hyphomicrobiales</taxon>
        <taxon>Beijerinckiaceae</taxon>
        <taxon>Methylocella</taxon>
    </lineage>
</organism>
<feature type="chain" id="PRO_1000166306" description="Large ribosomal subunit protein uL15">
    <location>
        <begin position="1"/>
        <end position="164"/>
    </location>
</feature>
<feature type="region of interest" description="Disordered" evidence="2">
    <location>
        <begin position="1"/>
        <end position="35"/>
    </location>
</feature>
<feature type="compositionally biased region" description="Polar residues" evidence="2">
    <location>
        <begin position="1"/>
        <end position="14"/>
    </location>
</feature>
<feature type="compositionally biased region" description="Gly residues" evidence="2">
    <location>
        <begin position="21"/>
        <end position="35"/>
    </location>
</feature>
<gene>
    <name evidence="1" type="primary">rplO</name>
    <name type="ordered locus">Msil_0561</name>
</gene>
<accession>B8ELE4</accession>
<sequence>MKLNEIQDNPGSSKSRMRVGRGIGSGKGKTCGRGVKGQKARTGVAIKGFEGGQMPLHRRLPKRGFYNPFGLDYNEINLGRLQEAVDAGRIDVAAVVTNESLIASGLISKPRDGVKILGVGELKAKLSFQVAAASKSAVAAIEAAGGSIELLKRAPEAPTASAEA</sequence>
<comment type="function">
    <text evidence="1">Binds to the 23S rRNA.</text>
</comment>
<comment type="subunit">
    <text evidence="1">Part of the 50S ribosomal subunit.</text>
</comment>
<comment type="similarity">
    <text evidence="1">Belongs to the universal ribosomal protein uL15 family.</text>
</comment>